<organism>
    <name type="scientific">Staphylococcus aureus (strain MW2)</name>
    <dbReference type="NCBI Taxonomy" id="196620"/>
    <lineage>
        <taxon>Bacteria</taxon>
        <taxon>Bacillati</taxon>
        <taxon>Bacillota</taxon>
        <taxon>Bacilli</taxon>
        <taxon>Bacillales</taxon>
        <taxon>Staphylococcaceae</taxon>
        <taxon>Staphylococcus</taxon>
    </lineage>
</organism>
<feature type="chain" id="PRO_0000276788" description="Nickel import system permease protein NikC">
    <location>
        <begin position="1"/>
        <end position="276"/>
    </location>
</feature>
<feature type="transmembrane region" description="Helical" evidence="2">
    <location>
        <begin position="10"/>
        <end position="30"/>
    </location>
</feature>
<feature type="transmembrane region" description="Helical" evidence="2">
    <location>
        <begin position="73"/>
        <end position="93"/>
    </location>
</feature>
<feature type="transmembrane region" description="Helical" evidence="2">
    <location>
        <begin position="108"/>
        <end position="128"/>
    </location>
</feature>
<feature type="transmembrane region" description="Helical" evidence="2">
    <location>
        <begin position="186"/>
        <end position="206"/>
    </location>
</feature>
<feature type="transmembrane region" description="Helical" evidence="2">
    <location>
        <begin position="238"/>
        <end position="258"/>
    </location>
</feature>
<feature type="domain" description="ABC transmembrane type-1" evidence="2">
    <location>
        <begin position="69"/>
        <end position="258"/>
    </location>
</feature>
<evidence type="ECO:0000250" key="1">
    <source>
        <dbReference type="UniProtKB" id="Q2FYQ6"/>
    </source>
</evidence>
<evidence type="ECO:0000255" key="2">
    <source>
        <dbReference type="PROSITE-ProRule" id="PRU00441"/>
    </source>
</evidence>
<evidence type="ECO:0000305" key="3"/>
<sequence>MHKIFSKNNLIFFVFVAFIFVVIVLQFFVSSENATKVNLSQTFEPISWLHLLGTDDYGRDLFTRIIIGARSTLFVTVLTLIAIVVIGVTLGLFAGYKKGWIERLVLRFIDVGLSIPEFIIMIALASFFQPSLWNLVISITLIKWMNYTRLTRSIVNSEMNKPYIKMAQLFHVPTRTILIRHLTPKIIPAIIVLMVVDFGKIILYISSLSFIGLGAQPPTPEWGAMLQQGRDFISSHPIMLIAPASVIAITILIFNLTGDALRDRLLKQRGEYDESH</sequence>
<keyword id="KW-1003">Cell membrane</keyword>
<keyword id="KW-0406">Ion transport</keyword>
<keyword id="KW-0472">Membrane</keyword>
<keyword id="KW-0533">Nickel</keyword>
<keyword id="KW-0921">Nickel transport</keyword>
<keyword id="KW-0812">Transmembrane</keyword>
<keyword id="KW-1133">Transmembrane helix</keyword>
<keyword id="KW-0813">Transport</keyword>
<reference key="1">
    <citation type="journal article" date="2002" name="Lancet">
        <title>Genome and virulence determinants of high virulence community-acquired MRSA.</title>
        <authorList>
            <person name="Baba T."/>
            <person name="Takeuchi F."/>
            <person name="Kuroda M."/>
            <person name="Yuzawa H."/>
            <person name="Aoki K."/>
            <person name="Oguchi A."/>
            <person name="Nagai Y."/>
            <person name="Iwama N."/>
            <person name="Asano K."/>
            <person name="Naimi T."/>
            <person name="Kuroda H."/>
            <person name="Cui L."/>
            <person name="Yamamoto K."/>
            <person name="Hiramatsu K."/>
        </authorList>
    </citation>
    <scope>NUCLEOTIDE SEQUENCE [LARGE SCALE GENOMIC DNA]</scope>
    <source>
        <strain>MW2</strain>
    </source>
</reference>
<name>NIKC_STAAW</name>
<protein>
    <recommendedName>
        <fullName evidence="1">Nickel import system permease protein NikC</fullName>
    </recommendedName>
</protein>
<comment type="function">
    <text evidence="1">Part of the ABC transporter complex NikABCDE (Opp2) involved in nickel import. Probably responsible for the translocation of the substrate across the membrane.</text>
</comment>
<comment type="subunit">
    <text evidence="1">The complex is composed of two ATP-binding proteins (NikD and NikE), two transmembrane proteins (NikB and NikC) and a solute-binding protein (NikA).</text>
</comment>
<comment type="subcellular location">
    <subcellularLocation>
        <location evidence="3">Cell membrane</location>
        <topology evidence="2">Multi-pass membrane protein</topology>
    </subcellularLocation>
</comment>
<comment type="similarity">
    <text evidence="3">Belongs to the binding-protein-dependent transport system permease family. OppBC subfamily.</text>
</comment>
<dbReference type="EMBL" id="BA000033">
    <property type="protein sequence ID" value="BAB95134.1"/>
    <property type="molecule type" value="Genomic_DNA"/>
</dbReference>
<dbReference type="RefSeq" id="WP_000548932.1">
    <property type="nucleotide sequence ID" value="NC_003923.1"/>
</dbReference>
<dbReference type="SMR" id="Q7A0Y0"/>
<dbReference type="KEGG" id="sam:MW1269"/>
<dbReference type="HOGENOM" id="CLU_028518_5_3_9"/>
<dbReference type="GO" id="GO:0005886">
    <property type="term" value="C:plasma membrane"/>
    <property type="evidence" value="ECO:0007669"/>
    <property type="project" value="UniProtKB-SubCell"/>
</dbReference>
<dbReference type="GO" id="GO:0015675">
    <property type="term" value="P:nickel cation transport"/>
    <property type="evidence" value="ECO:0007669"/>
    <property type="project" value="UniProtKB-KW"/>
</dbReference>
<dbReference type="GO" id="GO:0055085">
    <property type="term" value="P:transmembrane transport"/>
    <property type="evidence" value="ECO:0007669"/>
    <property type="project" value="InterPro"/>
</dbReference>
<dbReference type="CDD" id="cd06261">
    <property type="entry name" value="TM_PBP2"/>
    <property type="match status" value="1"/>
</dbReference>
<dbReference type="Gene3D" id="1.10.3720.10">
    <property type="entry name" value="MetI-like"/>
    <property type="match status" value="1"/>
</dbReference>
<dbReference type="InterPro" id="IPR053385">
    <property type="entry name" value="ABC_transport_permease"/>
</dbReference>
<dbReference type="InterPro" id="IPR050366">
    <property type="entry name" value="BP-dependent_transpt_permease"/>
</dbReference>
<dbReference type="InterPro" id="IPR000515">
    <property type="entry name" value="MetI-like"/>
</dbReference>
<dbReference type="InterPro" id="IPR035906">
    <property type="entry name" value="MetI-like_sf"/>
</dbReference>
<dbReference type="NCBIfam" id="NF045474">
    <property type="entry name" value="Opp2C"/>
    <property type="match status" value="1"/>
</dbReference>
<dbReference type="PANTHER" id="PTHR43386:SF1">
    <property type="entry name" value="D,D-DIPEPTIDE TRANSPORT SYSTEM PERMEASE PROTEIN DDPC-RELATED"/>
    <property type="match status" value="1"/>
</dbReference>
<dbReference type="PANTHER" id="PTHR43386">
    <property type="entry name" value="OLIGOPEPTIDE TRANSPORT SYSTEM PERMEASE PROTEIN APPC"/>
    <property type="match status" value="1"/>
</dbReference>
<dbReference type="Pfam" id="PF00528">
    <property type="entry name" value="BPD_transp_1"/>
    <property type="match status" value="1"/>
</dbReference>
<dbReference type="SUPFAM" id="SSF161098">
    <property type="entry name" value="MetI-like"/>
    <property type="match status" value="1"/>
</dbReference>
<dbReference type="PROSITE" id="PS50928">
    <property type="entry name" value="ABC_TM1"/>
    <property type="match status" value="1"/>
</dbReference>
<gene>
    <name evidence="1" type="primary">nikC</name>
    <name type="synonym">oppC2</name>
    <name type="ordered locus">MW1269</name>
</gene>
<proteinExistence type="inferred from homology"/>
<accession>Q7A0Y0</accession>